<dbReference type="EC" id="3.4.21.-"/>
<dbReference type="EMBL" id="BA000033">
    <property type="protein sequence ID" value="BAB95619.1"/>
    <property type="molecule type" value="Genomic_DNA"/>
</dbReference>
<dbReference type="RefSeq" id="WP_001039444.1">
    <property type="nucleotide sequence ID" value="NC_003923.1"/>
</dbReference>
<dbReference type="SMR" id="Q8NVX6"/>
<dbReference type="MEROPS" id="S01.282"/>
<dbReference type="KEGG" id="sam:MW1754"/>
<dbReference type="HOGENOM" id="CLU_073589_2_0_9"/>
<dbReference type="GO" id="GO:0005576">
    <property type="term" value="C:extracellular region"/>
    <property type="evidence" value="ECO:0007669"/>
    <property type="project" value="UniProtKB-SubCell"/>
</dbReference>
<dbReference type="GO" id="GO:0004252">
    <property type="term" value="F:serine-type endopeptidase activity"/>
    <property type="evidence" value="ECO:0007669"/>
    <property type="project" value="InterPro"/>
</dbReference>
<dbReference type="GO" id="GO:0006508">
    <property type="term" value="P:proteolysis"/>
    <property type="evidence" value="ECO:0007669"/>
    <property type="project" value="UniProtKB-KW"/>
</dbReference>
<dbReference type="Gene3D" id="2.40.10.10">
    <property type="entry name" value="Trypsin-like serine proteases"/>
    <property type="match status" value="2"/>
</dbReference>
<dbReference type="InterPro" id="IPR009003">
    <property type="entry name" value="Peptidase_S1_PA"/>
</dbReference>
<dbReference type="InterPro" id="IPR043504">
    <property type="entry name" value="Peptidase_S1_PA_chymotrypsin"/>
</dbReference>
<dbReference type="InterPro" id="IPR008256">
    <property type="entry name" value="Peptidase_S1B"/>
</dbReference>
<dbReference type="InterPro" id="IPR008353">
    <property type="entry name" value="Peptidase_S1B_tx"/>
</dbReference>
<dbReference type="InterPro" id="IPR001254">
    <property type="entry name" value="Trypsin_dom"/>
</dbReference>
<dbReference type="InterPro" id="IPR028301">
    <property type="entry name" value="V8_his_AS"/>
</dbReference>
<dbReference type="PANTHER" id="PTHR43019:SF23">
    <property type="entry name" value="PROTEASE DO-LIKE 5, CHLOROPLASTIC"/>
    <property type="match status" value="1"/>
</dbReference>
<dbReference type="PANTHER" id="PTHR43019">
    <property type="entry name" value="SERINE ENDOPROTEASE DEGS"/>
    <property type="match status" value="1"/>
</dbReference>
<dbReference type="Pfam" id="PF00089">
    <property type="entry name" value="Trypsin"/>
    <property type="match status" value="1"/>
</dbReference>
<dbReference type="PRINTS" id="PR01774">
    <property type="entry name" value="EXFOLTOXIN"/>
</dbReference>
<dbReference type="PRINTS" id="PR00839">
    <property type="entry name" value="V8PROTEASE"/>
</dbReference>
<dbReference type="SUPFAM" id="SSF50494">
    <property type="entry name" value="Trypsin-like serine proteases"/>
    <property type="match status" value="1"/>
</dbReference>
<dbReference type="PROSITE" id="PS00672">
    <property type="entry name" value="V8_HIS"/>
    <property type="match status" value="1"/>
</dbReference>
<accession>Q8NVX6</accession>
<feature type="signal peptide" evidence="1">
    <location>
        <begin position="1"/>
        <end position="36"/>
    </location>
</feature>
<feature type="chain" id="PRO_0000359545" description="Serine protease SplB">
    <location>
        <begin position="37"/>
        <end position="240"/>
    </location>
</feature>
<feature type="active site" description="Charge relay system" evidence="2">
    <location>
        <position position="75"/>
    </location>
</feature>
<feature type="active site" description="Charge relay system" evidence="2">
    <location>
        <position position="113"/>
    </location>
</feature>
<feature type="active site" description="Charge relay system" evidence="2">
    <location>
        <position position="193"/>
    </location>
</feature>
<protein>
    <recommendedName>
        <fullName>Serine protease SplB</fullName>
        <ecNumber>3.4.21.-</ecNumber>
    </recommendedName>
</protein>
<sequence length="240" mass="26109">MNKNVVIKSLAALTILTSVTGIGITLVEEVQQTAKAENNVTKVKDTNIFPYTGVVAFKSATGFVVGKNTILTNKHVSKNYKVGDRITAHPNSDKGNGGIYSIKKIINYPGKEDVSVIQVEERAIERGPKGFNFNDNVTPFKYAAGAKAGERIKVIGYPHPYKNKYVLYESTGPVMSVEGSSIVYSAHTESGNSGSPVLNSNNELVGIHFASDVKNDDNRNAYGVYFTPEIKKFIAENIDK</sequence>
<reference key="1">
    <citation type="journal article" date="2002" name="Lancet">
        <title>Genome and virulence determinants of high virulence community-acquired MRSA.</title>
        <authorList>
            <person name="Baba T."/>
            <person name="Takeuchi F."/>
            <person name="Kuroda M."/>
            <person name="Yuzawa H."/>
            <person name="Aoki K."/>
            <person name="Oguchi A."/>
            <person name="Nagai Y."/>
            <person name="Iwama N."/>
            <person name="Asano K."/>
            <person name="Naimi T."/>
            <person name="Kuroda H."/>
            <person name="Cui L."/>
            <person name="Yamamoto K."/>
            <person name="Hiramatsu K."/>
        </authorList>
    </citation>
    <scope>NUCLEOTIDE SEQUENCE [LARGE SCALE GENOMIC DNA]</scope>
    <source>
        <strain>MW2</strain>
    </source>
</reference>
<name>SPLB_STAAW</name>
<evidence type="ECO:0000250" key="1"/>
<evidence type="ECO:0000250" key="2">
    <source>
        <dbReference type="UniProtKB" id="Q2FXC3"/>
    </source>
</evidence>
<evidence type="ECO:0000305" key="3"/>
<proteinExistence type="inferred from homology"/>
<gene>
    <name type="primary">splB</name>
    <name type="ordered locus">MW1754</name>
</gene>
<organism>
    <name type="scientific">Staphylococcus aureus (strain MW2)</name>
    <dbReference type="NCBI Taxonomy" id="196620"/>
    <lineage>
        <taxon>Bacteria</taxon>
        <taxon>Bacillati</taxon>
        <taxon>Bacillota</taxon>
        <taxon>Bacilli</taxon>
        <taxon>Bacillales</taxon>
        <taxon>Staphylococcaceae</taxon>
        <taxon>Staphylococcus</taxon>
    </lineage>
</organism>
<comment type="function">
    <text evidence="1">Serine protease that cleaves specifically after the sequence Trp-Glu-Leu-Gln.</text>
</comment>
<comment type="subcellular location">
    <subcellularLocation>
        <location evidence="1">Secreted</location>
    </subcellularLocation>
</comment>
<comment type="similarity">
    <text evidence="3">Belongs to the peptidase S1B family.</text>
</comment>
<keyword id="KW-0378">Hydrolase</keyword>
<keyword id="KW-0645">Protease</keyword>
<keyword id="KW-0964">Secreted</keyword>
<keyword id="KW-0720">Serine protease</keyword>
<keyword id="KW-0732">Signal</keyword>